<feature type="chain" id="PRO_1000050653" description="Large ribosomal subunit protein bL35">
    <location>
        <begin position="1"/>
        <end position="67"/>
    </location>
</feature>
<sequence>MPKLKTKSGAKKRFIPKKSGKVKFRRAGVRHLATFGKTKKQKRHLRGTDHLAPMDAKKIKECFPYAR</sequence>
<organism>
    <name type="scientific">Anaeromyxobacter sp. (strain Fw109-5)</name>
    <dbReference type="NCBI Taxonomy" id="404589"/>
    <lineage>
        <taxon>Bacteria</taxon>
        <taxon>Pseudomonadati</taxon>
        <taxon>Myxococcota</taxon>
        <taxon>Myxococcia</taxon>
        <taxon>Myxococcales</taxon>
        <taxon>Cystobacterineae</taxon>
        <taxon>Anaeromyxobacteraceae</taxon>
        <taxon>Anaeromyxobacter</taxon>
    </lineage>
</organism>
<comment type="similarity">
    <text evidence="1">Belongs to the bacterial ribosomal protein bL35 family.</text>
</comment>
<accession>A7HBI8</accession>
<proteinExistence type="inferred from homology"/>
<reference key="1">
    <citation type="journal article" date="2015" name="Genome Announc.">
        <title>Complete genome sequence of Anaeromyxobacter sp. Fw109-5, an anaerobic, metal-reducing bacterium isolated from a contaminated subsurface environment.</title>
        <authorList>
            <person name="Hwang C."/>
            <person name="Copeland A."/>
            <person name="Lucas S."/>
            <person name="Lapidus A."/>
            <person name="Barry K."/>
            <person name="Glavina Del Rio T."/>
            <person name="Dalin E."/>
            <person name="Tice H."/>
            <person name="Pitluck S."/>
            <person name="Sims D."/>
            <person name="Brettin T."/>
            <person name="Bruce D.C."/>
            <person name="Detter J.C."/>
            <person name="Han C.S."/>
            <person name="Schmutz J."/>
            <person name="Larimer F.W."/>
            <person name="Land M.L."/>
            <person name="Hauser L.J."/>
            <person name="Kyrpides N."/>
            <person name="Lykidis A."/>
            <person name="Richardson P."/>
            <person name="Belieav A."/>
            <person name="Sanford R.A."/>
            <person name="Loeffler F.E."/>
            <person name="Fields M.W."/>
        </authorList>
    </citation>
    <scope>NUCLEOTIDE SEQUENCE [LARGE SCALE GENOMIC DNA]</scope>
    <source>
        <strain>Fw109-5</strain>
    </source>
</reference>
<evidence type="ECO:0000255" key="1">
    <source>
        <dbReference type="HAMAP-Rule" id="MF_00514"/>
    </source>
</evidence>
<evidence type="ECO:0000305" key="2"/>
<name>RL35_ANADF</name>
<dbReference type="EMBL" id="CP000769">
    <property type="protein sequence ID" value="ABS26084.1"/>
    <property type="molecule type" value="Genomic_DNA"/>
</dbReference>
<dbReference type="RefSeq" id="WP_012096662.1">
    <property type="nucleotide sequence ID" value="NC_009675.1"/>
</dbReference>
<dbReference type="SMR" id="A7HBI8"/>
<dbReference type="STRING" id="404589.Anae109_1881"/>
<dbReference type="KEGG" id="afw:Anae109_1881"/>
<dbReference type="eggNOG" id="COG0291">
    <property type="taxonomic scope" value="Bacteria"/>
</dbReference>
<dbReference type="HOGENOM" id="CLU_169643_2_1_7"/>
<dbReference type="OrthoDB" id="9804851at2"/>
<dbReference type="Proteomes" id="UP000006382">
    <property type="component" value="Chromosome"/>
</dbReference>
<dbReference type="GO" id="GO:0022625">
    <property type="term" value="C:cytosolic large ribosomal subunit"/>
    <property type="evidence" value="ECO:0007669"/>
    <property type="project" value="TreeGrafter"/>
</dbReference>
<dbReference type="GO" id="GO:0003735">
    <property type="term" value="F:structural constituent of ribosome"/>
    <property type="evidence" value="ECO:0007669"/>
    <property type="project" value="InterPro"/>
</dbReference>
<dbReference type="GO" id="GO:0006412">
    <property type="term" value="P:translation"/>
    <property type="evidence" value="ECO:0007669"/>
    <property type="project" value="UniProtKB-UniRule"/>
</dbReference>
<dbReference type="FunFam" id="4.10.410.60:FF:000001">
    <property type="entry name" value="50S ribosomal protein L35"/>
    <property type="match status" value="1"/>
</dbReference>
<dbReference type="Gene3D" id="4.10.410.60">
    <property type="match status" value="1"/>
</dbReference>
<dbReference type="HAMAP" id="MF_00514">
    <property type="entry name" value="Ribosomal_bL35"/>
    <property type="match status" value="1"/>
</dbReference>
<dbReference type="InterPro" id="IPR001706">
    <property type="entry name" value="Ribosomal_bL35"/>
</dbReference>
<dbReference type="InterPro" id="IPR021137">
    <property type="entry name" value="Ribosomal_bL35-like"/>
</dbReference>
<dbReference type="InterPro" id="IPR018265">
    <property type="entry name" value="Ribosomal_bL35_CS"/>
</dbReference>
<dbReference type="InterPro" id="IPR037229">
    <property type="entry name" value="Ribosomal_bL35_sf"/>
</dbReference>
<dbReference type="NCBIfam" id="TIGR00001">
    <property type="entry name" value="rpmI_bact"/>
    <property type="match status" value="1"/>
</dbReference>
<dbReference type="PANTHER" id="PTHR33343">
    <property type="entry name" value="54S RIBOSOMAL PROTEIN BL35M"/>
    <property type="match status" value="1"/>
</dbReference>
<dbReference type="PANTHER" id="PTHR33343:SF1">
    <property type="entry name" value="LARGE RIBOSOMAL SUBUNIT PROTEIN BL35M"/>
    <property type="match status" value="1"/>
</dbReference>
<dbReference type="Pfam" id="PF01632">
    <property type="entry name" value="Ribosomal_L35p"/>
    <property type="match status" value="1"/>
</dbReference>
<dbReference type="PRINTS" id="PR00064">
    <property type="entry name" value="RIBOSOMALL35"/>
</dbReference>
<dbReference type="SUPFAM" id="SSF143034">
    <property type="entry name" value="L35p-like"/>
    <property type="match status" value="1"/>
</dbReference>
<dbReference type="PROSITE" id="PS00936">
    <property type="entry name" value="RIBOSOMAL_L35"/>
    <property type="match status" value="1"/>
</dbReference>
<gene>
    <name evidence="1" type="primary">rpmI</name>
    <name type="ordered locus">Anae109_1881</name>
</gene>
<keyword id="KW-1185">Reference proteome</keyword>
<keyword id="KW-0687">Ribonucleoprotein</keyword>
<keyword id="KW-0689">Ribosomal protein</keyword>
<protein>
    <recommendedName>
        <fullName evidence="1">Large ribosomal subunit protein bL35</fullName>
    </recommendedName>
    <alternativeName>
        <fullName evidence="2">50S ribosomal protein L35</fullName>
    </alternativeName>
</protein>